<dbReference type="EC" id="1.2.1.46" evidence="2 3"/>
<dbReference type="EC" id="1.2.98.1" evidence="2 3"/>
<dbReference type="EMBL" id="D21201">
    <property type="protein sequence ID" value="BAA04743.1"/>
    <property type="molecule type" value="Genomic_DNA"/>
</dbReference>
<dbReference type="PIR" id="A55577">
    <property type="entry name" value="A55577"/>
</dbReference>
<dbReference type="PDB" id="1KOL">
    <property type="method" value="X-ray"/>
    <property type="resolution" value="1.65 A"/>
    <property type="chains" value="A/B=2-399"/>
</dbReference>
<dbReference type="PDBsum" id="1KOL"/>
<dbReference type="SMR" id="P46154"/>
<dbReference type="ChEMBL" id="CHEMBL1293291"/>
<dbReference type="eggNOG" id="COG1063">
    <property type="taxonomic scope" value="Bacteria"/>
</dbReference>
<dbReference type="BRENDA" id="1.2.1.46">
    <property type="organism ID" value="5092"/>
</dbReference>
<dbReference type="EvolutionaryTrace" id="P46154"/>
<dbReference type="GO" id="GO:0140087">
    <property type="term" value="F:acetaldehyde dehydrogenase (NAD+) activity"/>
    <property type="evidence" value="ECO:0007669"/>
    <property type="project" value="RHEA"/>
</dbReference>
<dbReference type="GO" id="GO:0018467">
    <property type="term" value="F:formaldehyde dehydrogenase (NAD+) activity"/>
    <property type="evidence" value="ECO:0007669"/>
    <property type="project" value="UniProtKB-EC"/>
</dbReference>
<dbReference type="GO" id="GO:0047895">
    <property type="term" value="F:formaldehyde dismutase activity"/>
    <property type="evidence" value="ECO:0007669"/>
    <property type="project" value="UniProtKB-EC"/>
</dbReference>
<dbReference type="GO" id="GO:0008270">
    <property type="term" value="F:zinc ion binding"/>
    <property type="evidence" value="ECO:0007669"/>
    <property type="project" value="InterPro"/>
</dbReference>
<dbReference type="CDD" id="cd08282">
    <property type="entry name" value="PFDH_like"/>
    <property type="match status" value="1"/>
</dbReference>
<dbReference type="FunFam" id="3.40.50.720:FF:000166">
    <property type="entry name" value="Glutathione-independent formaldehyde dehydrogenase"/>
    <property type="match status" value="1"/>
</dbReference>
<dbReference type="Gene3D" id="3.90.180.10">
    <property type="entry name" value="Medium-chain alcohol dehydrogenases, catalytic domain"/>
    <property type="match status" value="1"/>
</dbReference>
<dbReference type="Gene3D" id="3.40.50.720">
    <property type="entry name" value="NAD(P)-binding Rossmann-like Domain"/>
    <property type="match status" value="1"/>
</dbReference>
<dbReference type="InterPro" id="IPR013154">
    <property type="entry name" value="ADH-like_N"/>
</dbReference>
<dbReference type="InterPro" id="IPR002328">
    <property type="entry name" value="ADH_Zn_CS"/>
</dbReference>
<dbReference type="InterPro" id="IPR007698">
    <property type="entry name" value="AlaDH/PNT_NAD(H)-bd"/>
</dbReference>
<dbReference type="InterPro" id="IPR011032">
    <property type="entry name" value="GroES-like_sf"/>
</dbReference>
<dbReference type="InterPro" id="IPR014184">
    <property type="entry name" value="HCHO_DH_non_GSH"/>
</dbReference>
<dbReference type="InterPro" id="IPR036291">
    <property type="entry name" value="NAD(P)-bd_dom_sf"/>
</dbReference>
<dbReference type="NCBIfam" id="TIGR02819">
    <property type="entry name" value="fdhA_non_GSH"/>
    <property type="match status" value="1"/>
</dbReference>
<dbReference type="PANTHER" id="PTHR42813:SF3">
    <property type="entry name" value="GLUTATHIONE-INDEPENDENT FORMALDEHYDE DEHYDROGENASE"/>
    <property type="match status" value="1"/>
</dbReference>
<dbReference type="PANTHER" id="PTHR42813">
    <property type="entry name" value="ZINC-TYPE ALCOHOL DEHYDROGENASE-LIKE"/>
    <property type="match status" value="1"/>
</dbReference>
<dbReference type="Pfam" id="PF08240">
    <property type="entry name" value="ADH_N"/>
    <property type="match status" value="1"/>
</dbReference>
<dbReference type="Pfam" id="PF01262">
    <property type="entry name" value="AlaDh_PNT_C"/>
    <property type="match status" value="1"/>
</dbReference>
<dbReference type="SUPFAM" id="SSF50129">
    <property type="entry name" value="GroES-like"/>
    <property type="match status" value="1"/>
</dbReference>
<dbReference type="SUPFAM" id="SSF51735">
    <property type="entry name" value="NAD(P)-binding Rossmann-fold domains"/>
    <property type="match status" value="1"/>
</dbReference>
<dbReference type="PROSITE" id="PS00059">
    <property type="entry name" value="ADH_ZINC"/>
    <property type="match status" value="1"/>
</dbReference>
<sequence>MSGNRGVVYLGSGKVEVQKIDYPKMQDPRGKKIEHGVILKVVSTNICGSDQHMVRGRTTAQVGLVLGHEITGEVIEKGRDVENLQIGDLVSVPFNVACGRCRSCKEMHTGVCLTVNPARAGGAYGYVDMGDWTGGQAEYLLVPYADFNLLKLPDRDKAMEKIRDLTCLSDILPTGYHGAVTAGVGPGSTVYVAGAGPVGLAAAASARLLGAAVVIVGDLNPARLAHAKAQGFEIADLSLDTPLHEQIAALLGEPEVDCAVDAVGFEARGHGHEGAKHEAPATVLNSLMQVTRVAGKIGIPGLYVTEDPGAVDAAAKIGSLSIRFGLGWAKSHSFHTGQTPVMKYNRALMQAIMWDRINIAEVVGVQVISLDDAPRGYGEFDAGVPKKFVIDPHKTFSAA</sequence>
<organism>
    <name type="scientific">Pseudomonas putida</name>
    <name type="common">Arthrobacter siderocapsulatus</name>
    <dbReference type="NCBI Taxonomy" id="303"/>
    <lineage>
        <taxon>Bacteria</taxon>
        <taxon>Pseudomonadati</taxon>
        <taxon>Pseudomonadota</taxon>
        <taxon>Gammaproteobacteria</taxon>
        <taxon>Pseudomonadales</taxon>
        <taxon>Pseudomonadaceae</taxon>
        <taxon>Pseudomonas</taxon>
    </lineage>
</organism>
<reference key="1">
    <citation type="journal article" date="1994" name="J. Bacteriol.">
        <title>Cloning and high-level expression of the glutathione-independent formaldehyde dehydrogenase gene from Pseudomonas putida.</title>
        <authorList>
            <person name="Ito K."/>
            <person name="Takahashi M."/>
            <person name="Yoshimoto T."/>
            <person name="Tsuru D."/>
        </authorList>
    </citation>
    <scope>NUCLEOTIDE SEQUENCE [GENOMIC DNA]</scope>
    <scope>PARTIAL PROTEIN SEQUENCE</scope>
    <source>
        <strain>C-83</strain>
    </source>
</reference>
<reference key="2">
    <citation type="journal article" date="1984" name="J. Biochem.">
        <title>Formaldehyde dehydrogenase from Pseudomonas putida: a zinc metalloenzyme.</title>
        <authorList>
            <person name="Ogushi S."/>
            <person name="Ando M."/>
            <person name="Tsuru D."/>
        </authorList>
    </citation>
    <scope>FUNCTION</scope>
    <scope>CATALYTIC ACTIVITY</scope>
    <scope>ACTIVITY REGULATION</scope>
    <scope>COFACTOR</scope>
    <source>
        <strain>C-83</strain>
    </source>
</reference>
<reference key="3">
    <citation type="journal article" date="1997" name="Adv. Exp. Med. Biol.">
        <title>P. putida formaldehyde dehydrogenase. An alcohol dehydrogenase masquerading as an aldehyde dehydrogenase.</title>
        <authorList>
            <person name="Oppenheimer N.J."/>
            <person name="Henehan G.T."/>
            <person name="Huete-Perez J.A."/>
            <person name="Ito K."/>
        </authorList>
    </citation>
    <scope>FUNCTION</scope>
    <scope>CATALYTIC ACTIVITY</scope>
</reference>
<reference key="4">
    <citation type="journal article" date="2002" name="J. Mol. Biol.">
        <title>Crystal structure of formaldehyde dehydrogenase from Pseudomonas putida: the structural origin of the tightly bound cofactor in nicotinoprotein dehydrogenases.</title>
        <authorList>
            <person name="Tanaka N."/>
            <person name="Kusakabe Y."/>
            <person name="Ito K."/>
            <person name="Yoshimoto T."/>
            <person name="Nakamura K.T."/>
        </authorList>
    </citation>
    <scope>X-RAY CRYSTALLOGRAPHY (1.65 ANGSTROMS) IN COMPLEX WITH NAD AND ZINC</scope>
    <scope>SUBUNIT</scope>
</reference>
<feature type="initiator methionine" description="Removed">
    <location>
        <position position="1"/>
    </location>
</feature>
<feature type="chain" id="PRO_0000160757" description="Glutathione-independent formaldehyde dehydrogenase">
    <location>
        <begin position="2"/>
        <end position="399"/>
    </location>
</feature>
<feature type="binding site" evidence="1 6">
    <location>
        <position position="47"/>
    </location>
    <ligand>
        <name>Zn(2+)</name>
        <dbReference type="ChEBI" id="CHEBI:29105"/>
        <label>1</label>
        <note>catalytic</note>
    </ligand>
</feature>
<feature type="binding site" evidence="1 6">
    <location>
        <position position="48"/>
    </location>
    <ligand>
        <name>NAD(+)</name>
        <dbReference type="ChEBI" id="CHEBI:57540"/>
    </ligand>
</feature>
<feature type="binding site" evidence="1 6">
    <location>
        <position position="49"/>
    </location>
    <ligand>
        <name>NAD(+)</name>
        <dbReference type="ChEBI" id="CHEBI:57540"/>
    </ligand>
</feature>
<feature type="binding site" evidence="1 6">
    <location>
        <position position="52"/>
    </location>
    <ligand>
        <name>NAD(+)</name>
        <dbReference type="ChEBI" id="CHEBI:57540"/>
    </ligand>
</feature>
<feature type="binding site" evidence="1 6">
    <location>
        <position position="68"/>
    </location>
    <ligand>
        <name>Zn(2+)</name>
        <dbReference type="ChEBI" id="CHEBI:29105"/>
        <label>1</label>
        <note>catalytic</note>
    </ligand>
</feature>
<feature type="binding site" evidence="1 6">
    <location>
        <position position="98"/>
    </location>
    <ligand>
        <name>Zn(2+)</name>
        <dbReference type="ChEBI" id="CHEBI:29105"/>
        <label>2</label>
    </ligand>
</feature>
<feature type="binding site" evidence="1 6">
    <location>
        <position position="101"/>
    </location>
    <ligand>
        <name>Zn(2+)</name>
        <dbReference type="ChEBI" id="CHEBI:29105"/>
        <label>2</label>
    </ligand>
</feature>
<feature type="binding site" evidence="1 6">
    <location>
        <position position="104"/>
    </location>
    <ligand>
        <name>Zn(2+)</name>
        <dbReference type="ChEBI" id="CHEBI:29105"/>
        <label>2</label>
    </ligand>
</feature>
<feature type="binding site" evidence="1 6">
    <location>
        <position position="112"/>
    </location>
    <ligand>
        <name>Zn(2+)</name>
        <dbReference type="ChEBI" id="CHEBI:29105"/>
        <label>2</label>
    </ligand>
</feature>
<feature type="binding site" evidence="6">
    <location>
        <position position="170"/>
    </location>
    <ligand>
        <name>Zn(2+)</name>
        <dbReference type="ChEBI" id="CHEBI:29105"/>
        <label>1</label>
        <note>catalytic</note>
    </ligand>
</feature>
<feature type="binding site" evidence="1 6">
    <location>
        <position position="198"/>
    </location>
    <ligand>
        <name>NAD(+)</name>
        <dbReference type="ChEBI" id="CHEBI:57540"/>
    </ligand>
</feature>
<feature type="binding site" evidence="1 6">
    <location>
        <position position="218"/>
    </location>
    <ligand>
        <name>NAD(+)</name>
        <dbReference type="ChEBI" id="CHEBI:57540"/>
    </ligand>
</feature>
<feature type="binding site" evidence="1 6">
    <location>
        <position position="223"/>
    </location>
    <ligand>
        <name>NAD(+)</name>
        <dbReference type="ChEBI" id="CHEBI:57540"/>
    </ligand>
</feature>
<feature type="binding site" evidence="1 6">
    <location>
        <position position="263"/>
    </location>
    <ligand>
        <name>NAD(+)</name>
        <dbReference type="ChEBI" id="CHEBI:57540"/>
    </ligand>
</feature>
<feature type="binding site" evidence="1 6">
    <location>
        <position position="268"/>
    </location>
    <ligand>
        <name>NAD(+)</name>
        <dbReference type="ChEBI" id="CHEBI:57540"/>
    </ligand>
</feature>
<feature type="binding site" evidence="1 6">
    <location>
        <position position="270"/>
    </location>
    <ligand>
        <name>NAD(+)</name>
        <dbReference type="ChEBI" id="CHEBI:57540"/>
    </ligand>
</feature>
<feature type="binding site" evidence="1 6">
    <location>
        <position position="300"/>
    </location>
    <ligand>
        <name>NAD(+)</name>
        <dbReference type="ChEBI" id="CHEBI:57540"/>
    </ligand>
</feature>
<feature type="binding site" evidence="1 6">
    <location>
        <position position="302"/>
    </location>
    <ligand>
        <name>NAD(+)</name>
        <dbReference type="ChEBI" id="CHEBI:57540"/>
    </ligand>
</feature>
<feature type="binding site" evidence="1 6">
    <location>
        <position position="337"/>
    </location>
    <ligand>
        <name>NAD(+)</name>
        <dbReference type="ChEBI" id="CHEBI:57540"/>
    </ligand>
</feature>
<feature type="binding site" evidence="1 6">
    <location>
        <position position="339"/>
    </location>
    <ligand>
        <name>NAD(+)</name>
        <dbReference type="ChEBI" id="CHEBI:57540"/>
    </ligand>
</feature>
<feature type="strand" evidence="7">
    <location>
        <begin position="4"/>
        <end position="11"/>
    </location>
</feature>
<feature type="strand" evidence="7">
    <location>
        <begin position="14"/>
        <end position="20"/>
    </location>
</feature>
<feature type="strand" evidence="7">
    <location>
        <begin position="37"/>
        <end position="45"/>
    </location>
</feature>
<feature type="helix" evidence="7">
    <location>
        <begin position="48"/>
        <end position="54"/>
    </location>
</feature>
<feature type="strand" evidence="7">
    <location>
        <begin position="70"/>
        <end position="77"/>
    </location>
</feature>
<feature type="strand" evidence="7">
    <location>
        <begin position="89"/>
        <end position="91"/>
    </location>
</feature>
<feature type="strand" evidence="7">
    <location>
        <begin position="94"/>
        <end position="96"/>
    </location>
</feature>
<feature type="strand" evidence="7">
    <location>
        <begin position="99"/>
        <end position="101"/>
    </location>
</feature>
<feature type="helix" evidence="7">
    <location>
        <begin position="102"/>
        <end position="105"/>
    </location>
</feature>
<feature type="helix" evidence="7">
    <location>
        <begin position="109"/>
        <end position="111"/>
    </location>
</feature>
<feature type="strand" evidence="7">
    <location>
        <begin position="113"/>
        <end position="115"/>
    </location>
</feature>
<feature type="strand" evidence="7">
    <location>
        <begin position="117"/>
        <end position="120"/>
    </location>
</feature>
<feature type="strand" evidence="7">
    <location>
        <begin position="122"/>
        <end position="124"/>
    </location>
</feature>
<feature type="strand" evidence="7">
    <location>
        <begin position="136"/>
        <end position="144"/>
    </location>
</feature>
<feature type="helix" evidence="7">
    <location>
        <begin position="145"/>
        <end position="148"/>
    </location>
</feature>
<feature type="helix" evidence="7">
    <location>
        <begin position="155"/>
        <end position="160"/>
    </location>
</feature>
<feature type="helix" evidence="7">
    <location>
        <begin position="162"/>
        <end position="165"/>
    </location>
</feature>
<feature type="helix" evidence="7">
    <location>
        <begin position="166"/>
        <end position="169"/>
    </location>
</feature>
<feature type="helix" evidence="7">
    <location>
        <begin position="171"/>
        <end position="181"/>
    </location>
</feature>
<feature type="strand" evidence="7">
    <location>
        <begin position="189"/>
        <end position="193"/>
    </location>
</feature>
<feature type="helix" evidence="7">
    <location>
        <begin position="197"/>
        <end position="208"/>
    </location>
</feature>
<feature type="strand" evidence="7">
    <location>
        <begin position="212"/>
        <end position="219"/>
    </location>
</feature>
<feature type="helix" evidence="7">
    <location>
        <begin position="221"/>
        <end position="229"/>
    </location>
</feature>
<feature type="strand" evidence="7">
    <location>
        <begin position="233"/>
        <end position="236"/>
    </location>
</feature>
<feature type="strand" evidence="7">
    <location>
        <begin position="239"/>
        <end position="241"/>
    </location>
</feature>
<feature type="helix" evidence="7">
    <location>
        <begin position="243"/>
        <end position="251"/>
    </location>
</feature>
<feature type="strand" evidence="7">
    <location>
        <begin position="252"/>
        <end position="254"/>
    </location>
</feature>
<feature type="strand" evidence="7">
    <location>
        <begin position="256"/>
        <end position="261"/>
    </location>
</feature>
<feature type="helix" evidence="7">
    <location>
        <begin position="274"/>
        <end position="276"/>
    </location>
</feature>
<feature type="helix" evidence="7">
    <location>
        <begin position="282"/>
        <end position="290"/>
    </location>
</feature>
<feature type="strand" evidence="7">
    <location>
        <begin position="296"/>
        <end position="299"/>
    </location>
</feature>
<feature type="helix" evidence="7">
    <location>
        <begin position="313"/>
        <end position="316"/>
    </location>
</feature>
<feature type="helix" evidence="7">
    <location>
        <begin position="324"/>
        <end position="329"/>
    </location>
</feature>
<feature type="strand" evidence="7">
    <location>
        <begin position="333"/>
        <end position="338"/>
    </location>
</feature>
<feature type="helix" evidence="7">
    <location>
        <begin position="341"/>
        <end position="353"/>
    </location>
</feature>
<feature type="helix" evidence="7">
    <location>
        <begin position="359"/>
        <end position="363"/>
    </location>
</feature>
<feature type="strand" evidence="7">
    <location>
        <begin position="365"/>
        <end position="368"/>
    </location>
</feature>
<feature type="helix" evidence="7">
    <location>
        <begin position="370"/>
        <end position="372"/>
    </location>
</feature>
<feature type="helix" evidence="7">
    <location>
        <begin position="373"/>
        <end position="382"/>
    </location>
</feature>
<feature type="strand" evidence="7">
    <location>
        <begin position="387"/>
        <end position="390"/>
    </location>
</feature>
<comment type="function">
    <text evidence="2 3">Dehydrogenase that catalyzes the NAD(+)-dependent oxidation of formaldehyde and acetaldehyde, and, to a lesser extent, long-chain alcohols, but is inactive against propionaldehyde, butyraldehyde, methanol and ethanol. Can also catalyze the dismutation of a wide range of aldehydes such as formaldehyde.</text>
</comment>
<comment type="catalytic activity">
    <reaction evidence="2 3">
        <text>formaldehyde + NAD(+) + H2O = formate + NADH + 2 H(+)</text>
        <dbReference type="Rhea" id="RHEA:16425"/>
        <dbReference type="ChEBI" id="CHEBI:15377"/>
        <dbReference type="ChEBI" id="CHEBI:15378"/>
        <dbReference type="ChEBI" id="CHEBI:15740"/>
        <dbReference type="ChEBI" id="CHEBI:16842"/>
        <dbReference type="ChEBI" id="CHEBI:57540"/>
        <dbReference type="ChEBI" id="CHEBI:57945"/>
        <dbReference type="EC" id="1.2.1.46"/>
    </reaction>
</comment>
<comment type="catalytic activity">
    <reaction evidence="2">
        <text>acetaldehyde + NAD(+) + H2O = acetate + NADH + 2 H(+)</text>
        <dbReference type="Rhea" id="RHEA:25294"/>
        <dbReference type="ChEBI" id="CHEBI:15343"/>
        <dbReference type="ChEBI" id="CHEBI:15377"/>
        <dbReference type="ChEBI" id="CHEBI:15378"/>
        <dbReference type="ChEBI" id="CHEBI:30089"/>
        <dbReference type="ChEBI" id="CHEBI:57540"/>
        <dbReference type="ChEBI" id="CHEBI:57945"/>
    </reaction>
</comment>
<comment type="catalytic activity">
    <reaction evidence="2 3">
        <text>2 formaldehyde + H2O = methanol + formate + H(+)</text>
        <dbReference type="Rhea" id="RHEA:19221"/>
        <dbReference type="ChEBI" id="CHEBI:15377"/>
        <dbReference type="ChEBI" id="CHEBI:15378"/>
        <dbReference type="ChEBI" id="CHEBI:15740"/>
        <dbReference type="ChEBI" id="CHEBI:16842"/>
        <dbReference type="ChEBI" id="CHEBI:17790"/>
        <dbReference type="EC" id="1.2.98.1"/>
    </reaction>
</comment>
<comment type="cofactor">
    <cofactor evidence="2">
        <name>Zn(2+)</name>
        <dbReference type="ChEBI" id="CHEBI:29105"/>
    </cofactor>
    <text evidence="1 2">Binds 2 Zn(2+) ions per subunit.</text>
</comment>
<comment type="activity regulation">
    <text evidence="2">Inactivated by bipyridine and p-chloromercuribenzoate.</text>
</comment>
<comment type="biophysicochemical properties">
    <kinetics>
        <KM>0.25 mM for formaldehyde</KM>
    </kinetics>
    <phDependence>
        <text>Optimum pH is 8.9. Active from pH 5 to 10.</text>
    </phDependence>
    <temperatureDependence>
        <text>Thermostable up to 60 degrees Celsius.</text>
    </temperatureDependence>
</comment>
<comment type="subunit">
    <text evidence="1">Homotetramer.</text>
</comment>
<comment type="similarity">
    <text evidence="5">Belongs to the zinc-containing alcohol dehydrogenase family.</text>
</comment>
<keyword id="KW-0002">3D-structure</keyword>
<keyword id="KW-0903">Direct protein sequencing</keyword>
<keyword id="KW-0479">Metal-binding</keyword>
<keyword id="KW-0520">NAD</keyword>
<keyword id="KW-0560">Oxidoreductase</keyword>
<keyword id="KW-0862">Zinc</keyword>
<evidence type="ECO:0000269" key="1">
    <source>
    </source>
</evidence>
<evidence type="ECO:0000269" key="2">
    <source>
    </source>
</evidence>
<evidence type="ECO:0000269" key="3">
    <source>
    </source>
</evidence>
<evidence type="ECO:0000303" key="4">
    <source>
    </source>
</evidence>
<evidence type="ECO:0000305" key="5"/>
<evidence type="ECO:0007744" key="6">
    <source>
        <dbReference type="PDB" id="1KOL"/>
    </source>
</evidence>
<evidence type="ECO:0007829" key="7">
    <source>
        <dbReference type="PDB" id="1KOL"/>
    </source>
</evidence>
<gene>
    <name evidence="4" type="primary">fdhA</name>
</gene>
<accession>P46154</accession>
<name>FALDH_PSEPU</name>
<proteinExistence type="evidence at protein level"/>
<protein>
    <recommendedName>
        <fullName evidence="4">Glutathione-independent formaldehyde dehydrogenase</fullName>
        <shortName>FALDH</shortName>
        <shortName evidence="4">FDH</shortName>
        <ecNumber evidence="2 3">1.2.1.46</ecNumber>
    </recommendedName>
    <alternativeName>
        <fullName>Formaldehyde dismutase</fullName>
        <ecNumber evidence="2 3">1.2.98.1</ecNumber>
    </alternativeName>
</protein>